<dbReference type="EMBL" id="X78167">
    <property type="protein sequence ID" value="CAA55026.1"/>
    <property type="molecule type" value="mRNA"/>
</dbReference>
<dbReference type="EMBL" id="BC078724">
    <property type="protein sequence ID" value="AAH78724.1"/>
    <property type="molecule type" value="mRNA"/>
</dbReference>
<dbReference type="PIR" id="JC2369">
    <property type="entry name" value="JC2369"/>
</dbReference>
<dbReference type="RefSeq" id="NP_620814.1">
    <property type="nucleotide sequence ID" value="NM_139114.3"/>
</dbReference>
<dbReference type="SMR" id="P61314"/>
<dbReference type="BioGRID" id="251470">
    <property type="interactions" value="1"/>
</dbReference>
<dbReference type="FunCoup" id="P61314">
    <property type="interactions" value="3391"/>
</dbReference>
<dbReference type="IntAct" id="P61314">
    <property type="interactions" value="4"/>
</dbReference>
<dbReference type="STRING" id="10116.ENSRNOP00000010759"/>
<dbReference type="iPTMnet" id="P61314"/>
<dbReference type="PhosphoSitePlus" id="P61314"/>
<dbReference type="SwissPalm" id="P61314"/>
<dbReference type="jPOST" id="P61314"/>
<dbReference type="PaxDb" id="10116-ENSRNOP00000010759"/>
<dbReference type="Ensembl" id="ENSRNOT00000010759.7">
    <property type="protein sequence ID" value="ENSRNOP00000010759.3"/>
    <property type="gene ID" value="ENSRNOG00000008140.7"/>
</dbReference>
<dbReference type="GeneID" id="245981"/>
<dbReference type="KEGG" id="rno:245981"/>
<dbReference type="UCSC" id="RGD:621181">
    <property type="organism name" value="rat"/>
</dbReference>
<dbReference type="AGR" id="RGD:621181"/>
<dbReference type="CTD" id="6138"/>
<dbReference type="RGD" id="621181">
    <property type="gene designation" value="Rpl15"/>
</dbReference>
<dbReference type="eggNOG" id="KOG1678">
    <property type="taxonomic scope" value="Eukaryota"/>
</dbReference>
<dbReference type="GeneTree" id="ENSGT00910000144184"/>
<dbReference type="HOGENOM" id="CLU_080796_0_0_1"/>
<dbReference type="InParanoid" id="P61314"/>
<dbReference type="OMA" id="YIRDAWK"/>
<dbReference type="OrthoDB" id="10255148at2759"/>
<dbReference type="PhylomeDB" id="P61314"/>
<dbReference type="TreeFam" id="TF300050"/>
<dbReference type="Reactome" id="R-RNO-156827">
    <property type="pathway name" value="L13a-mediated translational silencing of Ceruloplasmin expression"/>
</dbReference>
<dbReference type="Reactome" id="R-RNO-1799339">
    <property type="pathway name" value="SRP-dependent cotranslational protein targeting to membrane"/>
</dbReference>
<dbReference type="Reactome" id="R-RNO-6791226">
    <property type="pathway name" value="Major pathway of rRNA processing in the nucleolus and cytosol"/>
</dbReference>
<dbReference type="Reactome" id="R-RNO-72689">
    <property type="pathway name" value="Formation of a pool of free 40S subunits"/>
</dbReference>
<dbReference type="Reactome" id="R-RNO-72706">
    <property type="pathway name" value="GTP hydrolysis and joining of the 60S ribosomal subunit"/>
</dbReference>
<dbReference type="Reactome" id="R-RNO-975956">
    <property type="pathway name" value="Nonsense Mediated Decay (NMD) independent of the Exon Junction Complex (EJC)"/>
</dbReference>
<dbReference type="Reactome" id="R-RNO-975957">
    <property type="pathway name" value="Nonsense Mediated Decay (NMD) enhanced by the Exon Junction Complex (EJC)"/>
</dbReference>
<dbReference type="PRO" id="PR:P61314"/>
<dbReference type="Proteomes" id="UP000002494">
    <property type="component" value="Chromosome 15"/>
</dbReference>
<dbReference type="Bgee" id="ENSRNOG00000008140">
    <property type="expression patterns" value="Expressed in spleen and 20 other cell types or tissues"/>
</dbReference>
<dbReference type="GO" id="GO:0031672">
    <property type="term" value="C:A band"/>
    <property type="evidence" value="ECO:0000314"/>
    <property type="project" value="RGD"/>
</dbReference>
<dbReference type="GO" id="GO:0005737">
    <property type="term" value="C:cytoplasm"/>
    <property type="evidence" value="ECO:0000266"/>
    <property type="project" value="RGD"/>
</dbReference>
<dbReference type="GO" id="GO:0022625">
    <property type="term" value="C:cytosolic large ribosomal subunit"/>
    <property type="evidence" value="ECO:0000314"/>
    <property type="project" value="RGD"/>
</dbReference>
<dbReference type="GO" id="GO:0022626">
    <property type="term" value="C:cytosolic ribosome"/>
    <property type="evidence" value="ECO:0000266"/>
    <property type="project" value="RGD"/>
</dbReference>
<dbReference type="GO" id="GO:0005634">
    <property type="term" value="C:nucleus"/>
    <property type="evidence" value="ECO:0000266"/>
    <property type="project" value="RGD"/>
</dbReference>
<dbReference type="GO" id="GO:0045202">
    <property type="term" value="C:synapse"/>
    <property type="evidence" value="ECO:0000266"/>
    <property type="project" value="RGD"/>
</dbReference>
<dbReference type="GO" id="GO:0003723">
    <property type="term" value="F:RNA binding"/>
    <property type="evidence" value="ECO:0000318"/>
    <property type="project" value="GO_Central"/>
</dbReference>
<dbReference type="GO" id="GO:0003735">
    <property type="term" value="F:structural constituent of ribosome"/>
    <property type="evidence" value="ECO:0000266"/>
    <property type="project" value="RGD"/>
</dbReference>
<dbReference type="GO" id="GO:0002181">
    <property type="term" value="P:cytoplasmic translation"/>
    <property type="evidence" value="ECO:0000318"/>
    <property type="project" value="GO_Central"/>
</dbReference>
<dbReference type="GO" id="GO:0045471">
    <property type="term" value="P:response to ethanol"/>
    <property type="evidence" value="ECO:0000270"/>
    <property type="project" value="RGD"/>
</dbReference>
<dbReference type="FunFam" id="3.40.1120.10:FF:000001">
    <property type="entry name" value="Ribosomal protein L15"/>
    <property type="match status" value="1"/>
</dbReference>
<dbReference type="Gene3D" id="3.40.1120.10">
    <property type="entry name" value="Ribosomal protein l15e"/>
    <property type="match status" value="1"/>
</dbReference>
<dbReference type="InterPro" id="IPR024794">
    <property type="entry name" value="Rbsml_eL15_core_dom_sf"/>
</dbReference>
<dbReference type="InterPro" id="IPR000439">
    <property type="entry name" value="Ribosomal_eL15"/>
</dbReference>
<dbReference type="InterPro" id="IPR020925">
    <property type="entry name" value="Ribosomal_eL15_CS"/>
</dbReference>
<dbReference type="InterPro" id="IPR012678">
    <property type="entry name" value="Ribosomal_uL23/eL15/eS24_sf"/>
</dbReference>
<dbReference type="NCBIfam" id="NF003269">
    <property type="entry name" value="PRK04243.1"/>
    <property type="match status" value="1"/>
</dbReference>
<dbReference type="PANTHER" id="PTHR11847:SF4">
    <property type="entry name" value="LARGE RIBOSOMAL SUBUNIT PROTEIN EL15"/>
    <property type="match status" value="1"/>
</dbReference>
<dbReference type="PANTHER" id="PTHR11847">
    <property type="entry name" value="RIBOSOMAL PROTEIN L15"/>
    <property type="match status" value="1"/>
</dbReference>
<dbReference type="Pfam" id="PF00827">
    <property type="entry name" value="Ribosomal_L15e"/>
    <property type="match status" value="1"/>
</dbReference>
<dbReference type="SMART" id="SM01384">
    <property type="entry name" value="Ribosomal_L15e"/>
    <property type="match status" value="1"/>
</dbReference>
<dbReference type="SUPFAM" id="SSF54189">
    <property type="entry name" value="Ribosomal proteins S24e, L23 and L15e"/>
    <property type="match status" value="1"/>
</dbReference>
<dbReference type="PROSITE" id="PS01194">
    <property type="entry name" value="RIBOSOMAL_L15E"/>
    <property type="match status" value="1"/>
</dbReference>
<name>RL15_RAT</name>
<accession>P61314</accession>
<accession>P39030</accession>
<accession>P41051</accession>
<accession>Q96C44</accession>
<accession>Q9H2E5</accession>
<evidence type="ECO:0000250" key="1">
    <source>
        <dbReference type="UniProtKB" id="P61313"/>
    </source>
</evidence>
<evidence type="ECO:0000256" key="2">
    <source>
        <dbReference type="SAM" id="MobiDB-lite"/>
    </source>
</evidence>
<evidence type="ECO:0000305" key="3"/>
<evidence type="ECO:0007744" key="4">
    <source>
    </source>
</evidence>
<protein>
    <recommendedName>
        <fullName evidence="3">Large ribosomal subunit protein eL15</fullName>
    </recommendedName>
    <alternativeName>
        <fullName>60S ribosomal protein L15</fullName>
    </alternativeName>
</protein>
<organism>
    <name type="scientific">Rattus norvegicus</name>
    <name type="common">Rat</name>
    <dbReference type="NCBI Taxonomy" id="10116"/>
    <lineage>
        <taxon>Eukaryota</taxon>
        <taxon>Metazoa</taxon>
        <taxon>Chordata</taxon>
        <taxon>Craniata</taxon>
        <taxon>Vertebrata</taxon>
        <taxon>Euteleostomi</taxon>
        <taxon>Mammalia</taxon>
        <taxon>Eutheria</taxon>
        <taxon>Euarchontoglires</taxon>
        <taxon>Glires</taxon>
        <taxon>Rodentia</taxon>
        <taxon>Myomorpha</taxon>
        <taxon>Muroidea</taxon>
        <taxon>Muridae</taxon>
        <taxon>Murinae</taxon>
        <taxon>Rattus</taxon>
    </lineage>
</organism>
<feature type="initiator methionine" description="Removed" evidence="1">
    <location>
        <position position="1"/>
    </location>
</feature>
<feature type="chain" id="PRO_0000127531" description="Large ribosomal subunit protein eL15">
    <location>
        <begin position="2"/>
        <end position="204"/>
    </location>
</feature>
<feature type="region of interest" description="Disordered" evidence="2">
    <location>
        <begin position="165"/>
        <end position="186"/>
    </location>
</feature>
<feature type="compositionally biased region" description="Basic residues" evidence="2">
    <location>
        <begin position="169"/>
        <end position="182"/>
    </location>
</feature>
<feature type="modified residue" description="Phosphoserine" evidence="4">
    <location>
        <position position="34"/>
    </location>
</feature>
<feature type="modified residue" description="Phosphoserine" evidence="4">
    <location>
        <position position="97"/>
    </location>
</feature>
<feature type="modified residue" description="Phosphoserine" evidence="1">
    <location>
        <position position="100"/>
    </location>
</feature>
<feature type="lipid moiety-binding region" description="N-myristoyl glycine" evidence="1">
    <location>
        <position position="2"/>
    </location>
</feature>
<feature type="cross-link" description="Glycyl lysine isopeptide (Lys-Gly) (interchain with G-Cter in SUMO2)" evidence="1">
    <location>
        <position position="83"/>
    </location>
</feature>
<comment type="function">
    <text evidence="1">Component of the large ribosomal subunit. The ribosome is a large ribonucleoprotein complex responsible for the synthesis of proteins in the cell.</text>
</comment>
<comment type="subunit">
    <text evidence="1">Component of the large ribosomal subunit. Interacts with IFIT1 (via TPR repeats 1-4).</text>
</comment>
<comment type="subcellular location">
    <subcellularLocation>
        <location evidence="1">Cytoplasm</location>
    </subcellularLocation>
</comment>
<comment type="similarity">
    <text evidence="3">Belongs to the eukaryotic ribosomal protein eL15 family.</text>
</comment>
<proteinExistence type="evidence at protein level"/>
<sequence>MGAYKYIQELWRKKQSDVMRFLLRVRCWQYRQLSALHRAPRPTRPDKARRLGYKAKQGYVIYRIRVRRGGRKRPVPKGATYGKPVHHGVNQLKFARSLQSVAEERAGRHCGALRVLNSYWVGEDSTYKFFEVILIDPFHKAIRRNPDTQWITKPVHKHREMRGLTSAGRKSRGLGKGHKFHHTIGGSRRAAWRRRNTLQLHRYR</sequence>
<reference key="1">
    <citation type="journal article" date="1994" name="Biochem. Biophys. Res. Commun.">
        <title>The primary structure of rat ribosomal protein L15.</title>
        <authorList>
            <person name="Chan Y.-L."/>
            <person name="Olvera J."/>
            <person name="Wool I.G."/>
        </authorList>
    </citation>
    <scope>NUCLEOTIDE SEQUENCE [MRNA]</scope>
    <scope>PARTIAL PROTEIN SEQUENCE</scope>
    <source>
        <strain>Sprague-Dawley</strain>
    </source>
</reference>
<reference key="2">
    <citation type="journal article" date="2004" name="Genome Res.">
        <title>The status, quality, and expansion of the NIH full-length cDNA project: the Mammalian Gene Collection (MGC).</title>
        <authorList>
            <consortium name="The MGC Project Team"/>
        </authorList>
    </citation>
    <scope>NUCLEOTIDE SEQUENCE [LARGE SCALE MRNA]</scope>
    <source>
        <tissue>Lung</tissue>
    </source>
</reference>
<reference key="3">
    <citation type="journal article" date="2012" name="Nat. Commun.">
        <title>Quantitative maps of protein phosphorylation sites across 14 different rat organs and tissues.</title>
        <authorList>
            <person name="Lundby A."/>
            <person name="Secher A."/>
            <person name="Lage K."/>
            <person name="Nordsborg N.B."/>
            <person name="Dmytriyev A."/>
            <person name="Lundby C."/>
            <person name="Olsen J.V."/>
        </authorList>
    </citation>
    <scope>PHOSPHORYLATION [LARGE SCALE ANALYSIS] AT SER-34 AND SER-97</scope>
    <scope>IDENTIFICATION BY MASS SPECTROMETRY [LARGE SCALE ANALYSIS]</scope>
</reference>
<gene>
    <name type="primary">Rpl15</name>
</gene>
<keyword id="KW-0963">Cytoplasm</keyword>
<keyword id="KW-0903">Direct protein sequencing</keyword>
<keyword id="KW-1017">Isopeptide bond</keyword>
<keyword id="KW-0449">Lipoprotein</keyword>
<keyword id="KW-0519">Myristate</keyword>
<keyword id="KW-0597">Phosphoprotein</keyword>
<keyword id="KW-1185">Reference proteome</keyword>
<keyword id="KW-0687">Ribonucleoprotein</keyword>
<keyword id="KW-0689">Ribosomal protein</keyword>
<keyword id="KW-0832">Ubl conjugation</keyword>